<reference key="1">
    <citation type="journal article" date="1987" name="Virology">
        <title>Nucleotide sequence and genome organization of human papillomavirus type 5.</title>
        <authorList>
            <person name="Zachow K.R."/>
            <person name="Ostrow R.S."/>
            <person name="Faras A.J."/>
        </authorList>
    </citation>
    <scope>NUCLEOTIDE SEQUENCE [GENOMIC DNA]</scope>
</reference>
<organismHost>
    <name type="scientific">Homo sapiens</name>
    <name type="common">Human</name>
    <dbReference type="NCBI Taxonomy" id="9606"/>
</organismHost>
<comment type="function">
    <text evidence="1">Contributes to multiple aspects of the viral life cycle including viral genome amplification, suppression of suprabasal cell differentiation and egress of newly formed virions. Induces host cell cycle arrest at the G2 phase by associating with and preventing the nuclear entry of host CDK1/cyclin B1 complexes. Inhibits cellular DNA replication by preventing loading of host replication licensing proteins MCM2 and MCM7 onto chromatin. Within the cytoplasm, associates with host kinase SRPK1, a splicing factor regulator, and inhibits its activity. Therefore, E4 favors expression of late viral transcripts by inhibiting SRPK1-mediated phosphorylation of host serine-arginine (SR) proteins that have critical roles in mRNA metabolism. Late in the infectious cycle, E4 also acts to diminish the integrity of the keratinocyte by disrupting the keratin cytoskeleton and inducing apoptosis through alteration of mitochondrial function to facilitate egress of the newly formed virions.</text>
</comment>
<comment type="subunit">
    <text evidence="1">Assembles into oligomeric complexes. Interacts with host CDK1. Interacts with host SRPK1; this interaction may favor expression of late viral transcripts. Interacts with host cytokeratin components KRT8 and KRT18.</text>
</comment>
<comment type="subcellular location">
    <subcellularLocation>
        <location evidence="1">Host cytoplasm</location>
    </subcellularLocation>
    <subcellularLocation>
        <location evidence="1">Host nucleus</location>
    </subcellularLocation>
</comment>
<comment type="PTM">
    <text evidence="1">Phosphorylated by host ERK. The phosphorylation triggers a structural change that enhances keratin binding and protein stability.</text>
</comment>
<comment type="miscellaneous">
    <text evidence="1">The major E4 form is first synthesized as an E1^E4 fusion protein from spliced E1^E4 transcripts, such that the first few amino acids of the E4 protein are derived from the N terminus of E1.</text>
</comment>
<comment type="similarity">
    <text evidence="3">Belongs to the papillomaviridae E4 protein family.</text>
</comment>
<name>VE4_HPV05</name>
<organism>
    <name type="scientific">Human papillomavirus 5</name>
    <dbReference type="NCBI Taxonomy" id="333923"/>
    <lineage>
        <taxon>Viruses</taxon>
        <taxon>Monodnaviria</taxon>
        <taxon>Shotokuvirae</taxon>
        <taxon>Cossaviricota</taxon>
        <taxon>Papovaviricetes</taxon>
        <taxon>Zurhausenvirales</taxon>
        <taxon>Papillomaviridae</taxon>
        <taxon>Firstpapillomavirinae</taxon>
        <taxon>Betapapillomavirus</taxon>
        <taxon>Betapapillomavirus 1</taxon>
    </lineage>
</organism>
<accession>P06924</accession>
<keyword id="KW-0244">Early protein</keyword>
<keyword id="KW-1035">Host cytoplasm</keyword>
<keyword id="KW-1079">Host G2/M cell cycle arrest by virus</keyword>
<keyword id="KW-1048">Host nucleus</keyword>
<keyword id="KW-0945">Host-virus interaction</keyword>
<keyword id="KW-1121">Modulation of host cell cycle by virus</keyword>
<keyword id="KW-0597">Phosphoprotein</keyword>
<keyword id="KW-1185">Reference proteome</keyword>
<proteinExistence type="inferred from homology"/>
<feature type="chain" id="PRO_0000133257" description="Protein E4">
    <location>
        <begin position="1"/>
        <end position="240"/>
    </location>
</feature>
<feature type="region of interest" description="Disordered" evidence="2">
    <location>
        <begin position="1"/>
        <end position="204"/>
    </location>
</feature>
<feature type="compositionally biased region" description="Pro residues" evidence="2">
    <location>
        <begin position="22"/>
        <end position="37"/>
    </location>
</feature>
<feature type="compositionally biased region" description="Basic and acidic residues" evidence="2">
    <location>
        <begin position="67"/>
        <end position="76"/>
    </location>
</feature>
<feature type="compositionally biased region" description="Pro residues" evidence="2">
    <location>
        <begin position="89"/>
        <end position="106"/>
    </location>
</feature>
<feature type="compositionally biased region" description="Basic and acidic residues" evidence="2">
    <location>
        <begin position="167"/>
        <end position="176"/>
    </location>
</feature>
<sequence length="240" mass="25150">MTDPNSKAPRLQGRQEDKQTQTPPPRPPPPPQPPLTPRPDSSPHQNSHNKPKPEEEGTDGGPPASQGDRKRSKGDQGPDTGPGLGPGRGPSPKPTPLGPPPGPGPRRSPRLGPLQADRDPEEGPQPPAEGEVEGHPGGDQGHPPPPPPAPHNGHSGHEPKVQQPEGPEGREGHEEGAVGGEGGDEEGHPPPPPPPTNGHEGGLLSSVASLLVKWEGHFDQLVQSIQDDLEDYWKKLATPQ</sequence>
<gene>
    <name type="primary">E4</name>
</gene>
<evidence type="ECO:0000250" key="1">
    <source>
        <dbReference type="UniProtKB" id="P06922"/>
    </source>
</evidence>
<evidence type="ECO:0000256" key="2">
    <source>
        <dbReference type="SAM" id="MobiDB-lite"/>
    </source>
</evidence>
<evidence type="ECO:0000305" key="3"/>
<dbReference type="EMBL" id="M17463">
    <property type="protein sequence ID" value="AAA46987.1"/>
    <property type="status" value="ALT_SEQ"/>
    <property type="molecule type" value="Genomic_DNA"/>
</dbReference>
<dbReference type="PIR" id="E26277">
    <property type="entry name" value="W4WL5"/>
</dbReference>
<dbReference type="RefSeq" id="NP_041369.1">
    <property type="nucleotide sequence ID" value="NC_001531.1"/>
</dbReference>
<dbReference type="SMR" id="P06924"/>
<dbReference type="GeneID" id="1489051"/>
<dbReference type="KEGG" id="vg:1489051"/>
<dbReference type="Proteomes" id="UP000009252">
    <property type="component" value="Genome"/>
</dbReference>
<dbReference type="GO" id="GO:0030430">
    <property type="term" value="C:host cell cytoplasm"/>
    <property type="evidence" value="ECO:0007669"/>
    <property type="project" value="UniProtKB-SubCell"/>
</dbReference>
<dbReference type="GO" id="GO:0042025">
    <property type="term" value="C:host cell nucleus"/>
    <property type="evidence" value="ECO:0007669"/>
    <property type="project" value="UniProtKB-SubCell"/>
</dbReference>
<dbReference type="GO" id="GO:0039592">
    <property type="term" value="P:symbiont-mediated arrest of host cell cycle during G2/M transition"/>
    <property type="evidence" value="ECO:0007669"/>
    <property type="project" value="UniProtKB-KW"/>
</dbReference>
<protein>
    <recommendedName>
        <fullName>Protein E4</fullName>
    </recommendedName>
</protein>